<comment type="function">
    <text evidence="1">This protein binds specifically to 23S rRNA; its binding is stimulated by other ribosomal proteins, e.g. L4, L17, and L20. It is important during the early stages of 50S assembly. It makes multiple contacts with different domains of the 23S rRNA in the assembled 50S subunit and ribosome (By similarity).</text>
</comment>
<comment type="function">
    <text evidence="1">The globular domain of the protein is located near the polypeptide exit tunnel on the outside of the subunit, while an extended beta-hairpin is found that lines the wall of the exit tunnel in the center of the 70S ribosome.</text>
</comment>
<comment type="subunit">
    <text evidence="1">Part of the 50S ribosomal subunit.</text>
</comment>
<comment type="similarity">
    <text evidence="1">Belongs to the universal ribosomal protein uL22 family.</text>
</comment>
<dbReference type="EMBL" id="CP000142">
    <property type="protein sequence ID" value="ABA87965.1"/>
    <property type="molecule type" value="Genomic_DNA"/>
</dbReference>
<dbReference type="RefSeq" id="WP_011340408.1">
    <property type="nucleotide sequence ID" value="NC_007498.2"/>
</dbReference>
<dbReference type="SMR" id="Q3A6P2"/>
<dbReference type="STRING" id="338963.Pcar_0706"/>
<dbReference type="KEGG" id="pca:Pcar_0706"/>
<dbReference type="eggNOG" id="COG0091">
    <property type="taxonomic scope" value="Bacteria"/>
</dbReference>
<dbReference type="HOGENOM" id="CLU_083987_3_3_7"/>
<dbReference type="OrthoDB" id="9805969at2"/>
<dbReference type="Proteomes" id="UP000002534">
    <property type="component" value="Chromosome"/>
</dbReference>
<dbReference type="GO" id="GO:0022625">
    <property type="term" value="C:cytosolic large ribosomal subunit"/>
    <property type="evidence" value="ECO:0007669"/>
    <property type="project" value="TreeGrafter"/>
</dbReference>
<dbReference type="GO" id="GO:0019843">
    <property type="term" value="F:rRNA binding"/>
    <property type="evidence" value="ECO:0007669"/>
    <property type="project" value="UniProtKB-UniRule"/>
</dbReference>
<dbReference type="GO" id="GO:0003735">
    <property type="term" value="F:structural constituent of ribosome"/>
    <property type="evidence" value="ECO:0007669"/>
    <property type="project" value="InterPro"/>
</dbReference>
<dbReference type="GO" id="GO:0006412">
    <property type="term" value="P:translation"/>
    <property type="evidence" value="ECO:0007669"/>
    <property type="project" value="UniProtKB-UniRule"/>
</dbReference>
<dbReference type="CDD" id="cd00336">
    <property type="entry name" value="Ribosomal_L22"/>
    <property type="match status" value="1"/>
</dbReference>
<dbReference type="FunFam" id="3.90.470.10:FF:000011">
    <property type="entry name" value="50S ribosomal protein L22"/>
    <property type="match status" value="1"/>
</dbReference>
<dbReference type="Gene3D" id="3.90.470.10">
    <property type="entry name" value="Ribosomal protein L22/L17"/>
    <property type="match status" value="1"/>
</dbReference>
<dbReference type="HAMAP" id="MF_01331_B">
    <property type="entry name" value="Ribosomal_uL22_B"/>
    <property type="match status" value="1"/>
</dbReference>
<dbReference type="InterPro" id="IPR001063">
    <property type="entry name" value="Ribosomal_uL22"/>
</dbReference>
<dbReference type="InterPro" id="IPR005727">
    <property type="entry name" value="Ribosomal_uL22_bac/chlpt-type"/>
</dbReference>
<dbReference type="InterPro" id="IPR047867">
    <property type="entry name" value="Ribosomal_uL22_bac/org-type"/>
</dbReference>
<dbReference type="InterPro" id="IPR018260">
    <property type="entry name" value="Ribosomal_uL22_CS"/>
</dbReference>
<dbReference type="InterPro" id="IPR036394">
    <property type="entry name" value="Ribosomal_uL22_sf"/>
</dbReference>
<dbReference type="NCBIfam" id="TIGR01044">
    <property type="entry name" value="rplV_bact"/>
    <property type="match status" value="1"/>
</dbReference>
<dbReference type="PANTHER" id="PTHR13501">
    <property type="entry name" value="CHLOROPLAST 50S RIBOSOMAL PROTEIN L22-RELATED"/>
    <property type="match status" value="1"/>
</dbReference>
<dbReference type="PANTHER" id="PTHR13501:SF8">
    <property type="entry name" value="LARGE RIBOSOMAL SUBUNIT PROTEIN UL22M"/>
    <property type="match status" value="1"/>
</dbReference>
<dbReference type="Pfam" id="PF00237">
    <property type="entry name" value="Ribosomal_L22"/>
    <property type="match status" value="1"/>
</dbReference>
<dbReference type="SUPFAM" id="SSF54843">
    <property type="entry name" value="Ribosomal protein L22"/>
    <property type="match status" value="1"/>
</dbReference>
<dbReference type="PROSITE" id="PS00464">
    <property type="entry name" value="RIBOSOMAL_L22"/>
    <property type="match status" value="1"/>
</dbReference>
<organism>
    <name type="scientific">Syntrophotalea carbinolica (strain DSM 2380 / NBRC 103641 / GraBd1)</name>
    <name type="common">Pelobacter carbinolicus</name>
    <dbReference type="NCBI Taxonomy" id="338963"/>
    <lineage>
        <taxon>Bacteria</taxon>
        <taxon>Pseudomonadati</taxon>
        <taxon>Thermodesulfobacteriota</taxon>
        <taxon>Desulfuromonadia</taxon>
        <taxon>Desulfuromonadales</taxon>
        <taxon>Syntrophotaleaceae</taxon>
        <taxon>Syntrophotalea</taxon>
    </lineage>
</organism>
<protein>
    <recommendedName>
        <fullName evidence="1">Large ribosomal subunit protein uL22</fullName>
    </recommendedName>
    <alternativeName>
        <fullName evidence="2">50S ribosomal protein L22</fullName>
    </alternativeName>
</protein>
<name>RL22_SYNC1</name>
<proteinExistence type="inferred from homology"/>
<evidence type="ECO:0000255" key="1">
    <source>
        <dbReference type="HAMAP-Rule" id="MF_01331"/>
    </source>
</evidence>
<evidence type="ECO:0000305" key="2"/>
<sequence length="110" mass="12342">MEAKAKLRYVRLSPRKTRLVVDMVRGKKVQEALNILRFSPQKAASIVYQLVGSAVANAEQKGVADVDRLFIESISVDQGPVLKRFMPRAQGRATRIRKPTSHITVVLNEK</sequence>
<accession>Q3A6P2</accession>
<keyword id="KW-1185">Reference proteome</keyword>
<keyword id="KW-0687">Ribonucleoprotein</keyword>
<keyword id="KW-0689">Ribosomal protein</keyword>
<keyword id="KW-0694">RNA-binding</keyword>
<keyword id="KW-0699">rRNA-binding</keyword>
<reference key="1">
    <citation type="submission" date="2005-10" db="EMBL/GenBank/DDBJ databases">
        <title>Complete sequence of Pelobacter carbinolicus DSM 2380.</title>
        <authorList>
            <person name="Copeland A."/>
            <person name="Lucas S."/>
            <person name="Lapidus A."/>
            <person name="Barry K."/>
            <person name="Detter J.C."/>
            <person name="Glavina T."/>
            <person name="Hammon N."/>
            <person name="Israni S."/>
            <person name="Pitluck S."/>
            <person name="Chertkov O."/>
            <person name="Schmutz J."/>
            <person name="Larimer F."/>
            <person name="Land M."/>
            <person name="Kyrpides N."/>
            <person name="Ivanova N."/>
            <person name="Richardson P."/>
        </authorList>
    </citation>
    <scope>NUCLEOTIDE SEQUENCE [LARGE SCALE GENOMIC DNA]</scope>
    <source>
        <strain>DSM 2380 / NBRC 103641 / GraBd1</strain>
    </source>
</reference>
<feature type="chain" id="PRO_0000243179" description="Large ribosomal subunit protein uL22">
    <location>
        <begin position="1"/>
        <end position="110"/>
    </location>
</feature>
<gene>
    <name evidence="1" type="primary">rplV</name>
    <name type="ordered locus">Pcar_0706</name>
</gene>